<gene>
    <name evidence="1" type="primary">dnaJ</name>
    <name type="ordered locus">Bsph_3797</name>
</gene>
<proteinExistence type="inferred from homology"/>
<dbReference type="EMBL" id="CP000817">
    <property type="protein sequence ID" value="ACA41275.1"/>
    <property type="molecule type" value="Genomic_DNA"/>
</dbReference>
<dbReference type="RefSeq" id="WP_012295326.1">
    <property type="nucleotide sequence ID" value="NC_010382.1"/>
</dbReference>
<dbReference type="SMR" id="B1HUD0"/>
<dbReference type="EnsemblBacteria" id="ACA41275">
    <property type="protein sequence ID" value="ACA41275"/>
    <property type="gene ID" value="Bsph_3797"/>
</dbReference>
<dbReference type="KEGG" id="lsp:Bsph_3797"/>
<dbReference type="HOGENOM" id="CLU_017633_0_7_9"/>
<dbReference type="Proteomes" id="UP000002164">
    <property type="component" value="Chromosome"/>
</dbReference>
<dbReference type="GO" id="GO:0005737">
    <property type="term" value="C:cytoplasm"/>
    <property type="evidence" value="ECO:0007669"/>
    <property type="project" value="UniProtKB-SubCell"/>
</dbReference>
<dbReference type="GO" id="GO:0005524">
    <property type="term" value="F:ATP binding"/>
    <property type="evidence" value="ECO:0007669"/>
    <property type="project" value="InterPro"/>
</dbReference>
<dbReference type="GO" id="GO:0031072">
    <property type="term" value="F:heat shock protein binding"/>
    <property type="evidence" value="ECO:0007669"/>
    <property type="project" value="InterPro"/>
</dbReference>
<dbReference type="GO" id="GO:0051082">
    <property type="term" value="F:unfolded protein binding"/>
    <property type="evidence" value="ECO:0007669"/>
    <property type="project" value="UniProtKB-UniRule"/>
</dbReference>
<dbReference type="GO" id="GO:0008270">
    <property type="term" value="F:zinc ion binding"/>
    <property type="evidence" value="ECO:0007669"/>
    <property type="project" value="UniProtKB-UniRule"/>
</dbReference>
<dbReference type="GO" id="GO:0051085">
    <property type="term" value="P:chaperone cofactor-dependent protein refolding"/>
    <property type="evidence" value="ECO:0007669"/>
    <property type="project" value="TreeGrafter"/>
</dbReference>
<dbReference type="GO" id="GO:0006260">
    <property type="term" value="P:DNA replication"/>
    <property type="evidence" value="ECO:0007669"/>
    <property type="project" value="UniProtKB-KW"/>
</dbReference>
<dbReference type="GO" id="GO:0042026">
    <property type="term" value="P:protein refolding"/>
    <property type="evidence" value="ECO:0007669"/>
    <property type="project" value="TreeGrafter"/>
</dbReference>
<dbReference type="GO" id="GO:0009408">
    <property type="term" value="P:response to heat"/>
    <property type="evidence" value="ECO:0007669"/>
    <property type="project" value="InterPro"/>
</dbReference>
<dbReference type="CDD" id="cd06257">
    <property type="entry name" value="DnaJ"/>
    <property type="match status" value="1"/>
</dbReference>
<dbReference type="CDD" id="cd10747">
    <property type="entry name" value="DnaJ_C"/>
    <property type="match status" value="1"/>
</dbReference>
<dbReference type="CDD" id="cd10719">
    <property type="entry name" value="DnaJ_zf"/>
    <property type="match status" value="1"/>
</dbReference>
<dbReference type="FunFam" id="1.10.287.110:FF:000031">
    <property type="entry name" value="Molecular chaperone DnaJ"/>
    <property type="match status" value="1"/>
</dbReference>
<dbReference type="FunFam" id="2.10.230.10:FF:000002">
    <property type="entry name" value="Molecular chaperone DnaJ"/>
    <property type="match status" value="1"/>
</dbReference>
<dbReference type="FunFam" id="2.60.260.20:FF:000004">
    <property type="entry name" value="Molecular chaperone DnaJ"/>
    <property type="match status" value="1"/>
</dbReference>
<dbReference type="FunFam" id="2.60.260.20:FF:000009">
    <property type="entry name" value="Putative Mitochondrial DnaJ chaperone"/>
    <property type="match status" value="1"/>
</dbReference>
<dbReference type="Gene3D" id="1.10.287.110">
    <property type="entry name" value="DnaJ domain"/>
    <property type="match status" value="1"/>
</dbReference>
<dbReference type="Gene3D" id="2.10.230.10">
    <property type="entry name" value="Heat shock protein DnaJ, cysteine-rich domain"/>
    <property type="match status" value="1"/>
</dbReference>
<dbReference type="Gene3D" id="2.60.260.20">
    <property type="entry name" value="Urease metallochaperone UreE, N-terminal domain"/>
    <property type="match status" value="2"/>
</dbReference>
<dbReference type="HAMAP" id="MF_01152">
    <property type="entry name" value="DnaJ"/>
    <property type="match status" value="1"/>
</dbReference>
<dbReference type="InterPro" id="IPR012724">
    <property type="entry name" value="DnaJ"/>
</dbReference>
<dbReference type="InterPro" id="IPR002939">
    <property type="entry name" value="DnaJ_C"/>
</dbReference>
<dbReference type="InterPro" id="IPR001623">
    <property type="entry name" value="DnaJ_domain"/>
</dbReference>
<dbReference type="InterPro" id="IPR018253">
    <property type="entry name" value="DnaJ_domain_CS"/>
</dbReference>
<dbReference type="InterPro" id="IPR008971">
    <property type="entry name" value="HSP40/DnaJ_pept-bd"/>
</dbReference>
<dbReference type="InterPro" id="IPR001305">
    <property type="entry name" value="HSP_DnaJ_Cys-rich_dom"/>
</dbReference>
<dbReference type="InterPro" id="IPR036410">
    <property type="entry name" value="HSP_DnaJ_Cys-rich_dom_sf"/>
</dbReference>
<dbReference type="InterPro" id="IPR036869">
    <property type="entry name" value="J_dom_sf"/>
</dbReference>
<dbReference type="NCBIfam" id="TIGR02349">
    <property type="entry name" value="DnaJ_bact"/>
    <property type="match status" value="1"/>
</dbReference>
<dbReference type="NCBIfam" id="NF008035">
    <property type="entry name" value="PRK10767.1"/>
    <property type="match status" value="1"/>
</dbReference>
<dbReference type="NCBIfam" id="NF010869">
    <property type="entry name" value="PRK14276.1"/>
    <property type="match status" value="1"/>
</dbReference>
<dbReference type="NCBIfam" id="NF010873">
    <property type="entry name" value="PRK14280.1"/>
    <property type="match status" value="1"/>
</dbReference>
<dbReference type="PANTHER" id="PTHR43096:SF48">
    <property type="entry name" value="CHAPERONE PROTEIN DNAJ"/>
    <property type="match status" value="1"/>
</dbReference>
<dbReference type="PANTHER" id="PTHR43096">
    <property type="entry name" value="DNAJ HOMOLOG 1, MITOCHONDRIAL-RELATED"/>
    <property type="match status" value="1"/>
</dbReference>
<dbReference type="Pfam" id="PF00226">
    <property type="entry name" value="DnaJ"/>
    <property type="match status" value="1"/>
</dbReference>
<dbReference type="Pfam" id="PF01556">
    <property type="entry name" value="DnaJ_C"/>
    <property type="match status" value="1"/>
</dbReference>
<dbReference type="Pfam" id="PF00684">
    <property type="entry name" value="DnaJ_CXXCXGXG"/>
    <property type="match status" value="1"/>
</dbReference>
<dbReference type="PRINTS" id="PR00625">
    <property type="entry name" value="JDOMAIN"/>
</dbReference>
<dbReference type="SMART" id="SM00271">
    <property type="entry name" value="DnaJ"/>
    <property type="match status" value="1"/>
</dbReference>
<dbReference type="SUPFAM" id="SSF46565">
    <property type="entry name" value="Chaperone J-domain"/>
    <property type="match status" value="1"/>
</dbReference>
<dbReference type="SUPFAM" id="SSF57938">
    <property type="entry name" value="DnaJ/Hsp40 cysteine-rich domain"/>
    <property type="match status" value="1"/>
</dbReference>
<dbReference type="SUPFAM" id="SSF49493">
    <property type="entry name" value="HSP40/DnaJ peptide-binding domain"/>
    <property type="match status" value="2"/>
</dbReference>
<dbReference type="PROSITE" id="PS00636">
    <property type="entry name" value="DNAJ_1"/>
    <property type="match status" value="1"/>
</dbReference>
<dbReference type="PROSITE" id="PS50076">
    <property type="entry name" value="DNAJ_2"/>
    <property type="match status" value="1"/>
</dbReference>
<dbReference type="PROSITE" id="PS51188">
    <property type="entry name" value="ZF_CR"/>
    <property type="match status" value="1"/>
</dbReference>
<name>DNAJ_LYSSC</name>
<keyword id="KW-0143">Chaperone</keyword>
<keyword id="KW-0963">Cytoplasm</keyword>
<keyword id="KW-0235">DNA replication</keyword>
<keyword id="KW-0479">Metal-binding</keyword>
<keyword id="KW-0677">Repeat</keyword>
<keyword id="KW-0346">Stress response</keyword>
<keyword id="KW-0862">Zinc</keyword>
<keyword id="KW-0863">Zinc-finger</keyword>
<organism>
    <name type="scientific">Lysinibacillus sphaericus (strain C3-41)</name>
    <dbReference type="NCBI Taxonomy" id="444177"/>
    <lineage>
        <taxon>Bacteria</taxon>
        <taxon>Bacillati</taxon>
        <taxon>Bacillota</taxon>
        <taxon>Bacilli</taxon>
        <taxon>Bacillales</taxon>
        <taxon>Bacillaceae</taxon>
        <taxon>Lysinibacillus</taxon>
    </lineage>
</organism>
<comment type="function">
    <text evidence="1">Participates actively in the response to hyperosmotic and heat shock by preventing the aggregation of stress-denatured proteins and by disaggregating proteins, also in an autonomous, DnaK-independent fashion. Unfolded proteins bind initially to DnaJ; upon interaction with the DnaJ-bound protein, DnaK hydrolyzes its bound ATP, resulting in the formation of a stable complex. GrpE releases ADP from DnaK; ATP binding to DnaK triggers the release of the substrate protein, thus completing the reaction cycle. Several rounds of ATP-dependent interactions between DnaJ, DnaK and GrpE are required for fully efficient folding. Also involved, together with DnaK and GrpE, in the DNA replication of plasmids through activation of initiation proteins.</text>
</comment>
<comment type="cofactor">
    <cofactor evidence="1">
        <name>Zn(2+)</name>
        <dbReference type="ChEBI" id="CHEBI:29105"/>
    </cofactor>
    <text evidence="1">Binds 2 Zn(2+) ions per monomer.</text>
</comment>
<comment type="subunit">
    <text evidence="1">Homodimer.</text>
</comment>
<comment type="subcellular location">
    <subcellularLocation>
        <location evidence="1">Cytoplasm</location>
    </subcellularLocation>
</comment>
<comment type="domain">
    <text evidence="1">The J domain is necessary and sufficient to stimulate DnaK ATPase activity. Zinc center 1 plays an important role in the autonomous, DnaK-independent chaperone activity of DnaJ. Zinc center 2 is essential for interaction with DnaK and for DnaJ activity.</text>
</comment>
<comment type="similarity">
    <text evidence="1">Belongs to the DnaJ family.</text>
</comment>
<sequence length="372" mass="41079">MEKRDYYEVLGLTKSATKDEIKKAYRKLSKQYHPDLNKEPGADEKFKEIAEAYEVLSDDQKKARYDQFGHEDPNAGFGGGFGGGGFGGFEDIFSSFFGGGGRRQDPNAPRKGDDLQYRMNIKFEEAIFGKETEIEIPKDETCETCHGSGAKPGTQPETCSTCNGAGQINQAVDTPFGRMMNRRSCTTCHGTGKIIKEKCSTCRGEGKVQKRKKIKVSIPAGVDDGQQIRVSGQGEPGINGGPAGDLYIMFRVQGHNDFERDGDDIYFELKLTFPQAALGDEIEVPTVHGKVKLRIPAGTQSGAQFRLKDKGVKNVHGYGMGNQYVTVKVMTPEKLTEKQKQLLREFAEISGDIPEEQGSSLFDKIKKKFQGE</sequence>
<protein>
    <recommendedName>
        <fullName evidence="1">Chaperone protein DnaJ</fullName>
    </recommendedName>
</protein>
<feature type="chain" id="PRO_1000137705" description="Chaperone protein DnaJ">
    <location>
        <begin position="1"/>
        <end position="372"/>
    </location>
</feature>
<feature type="domain" description="J" evidence="1">
    <location>
        <begin position="5"/>
        <end position="69"/>
    </location>
</feature>
<feature type="repeat" description="CXXCXGXG motif">
    <location>
        <begin position="142"/>
        <end position="149"/>
    </location>
</feature>
<feature type="repeat" description="CXXCXGXG motif">
    <location>
        <begin position="159"/>
        <end position="166"/>
    </location>
</feature>
<feature type="repeat" description="CXXCXGXG motif">
    <location>
        <begin position="185"/>
        <end position="192"/>
    </location>
</feature>
<feature type="repeat" description="CXXCXGXG motif">
    <location>
        <begin position="199"/>
        <end position="206"/>
    </location>
</feature>
<feature type="zinc finger region" description="CR-type" evidence="1">
    <location>
        <begin position="129"/>
        <end position="211"/>
    </location>
</feature>
<feature type="binding site" evidence="1">
    <location>
        <position position="142"/>
    </location>
    <ligand>
        <name>Zn(2+)</name>
        <dbReference type="ChEBI" id="CHEBI:29105"/>
        <label>1</label>
    </ligand>
</feature>
<feature type="binding site" evidence="1">
    <location>
        <position position="145"/>
    </location>
    <ligand>
        <name>Zn(2+)</name>
        <dbReference type="ChEBI" id="CHEBI:29105"/>
        <label>1</label>
    </ligand>
</feature>
<feature type="binding site" evidence="1">
    <location>
        <position position="159"/>
    </location>
    <ligand>
        <name>Zn(2+)</name>
        <dbReference type="ChEBI" id="CHEBI:29105"/>
        <label>2</label>
    </ligand>
</feature>
<feature type="binding site" evidence="1">
    <location>
        <position position="162"/>
    </location>
    <ligand>
        <name>Zn(2+)</name>
        <dbReference type="ChEBI" id="CHEBI:29105"/>
        <label>2</label>
    </ligand>
</feature>
<feature type="binding site" evidence="1">
    <location>
        <position position="185"/>
    </location>
    <ligand>
        <name>Zn(2+)</name>
        <dbReference type="ChEBI" id="CHEBI:29105"/>
        <label>2</label>
    </ligand>
</feature>
<feature type="binding site" evidence="1">
    <location>
        <position position="188"/>
    </location>
    <ligand>
        <name>Zn(2+)</name>
        <dbReference type="ChEBI" id="CHEBI:29105"/>
        <label>2</label>
    </ligand>
</feature>
<feature type="binding site" evidence="1">
    <location>
        <position position="199"/>
    </location>
    <ligand>
        <name>Zn(2+)</name>
        <dbReference type="ChEBI" id="CHEBI:29105"/>
        <label>1</label>
    </ligand>
</feature>
<feature type="binding site" evidence="1">
    <location>
        <position position="202"/>
    </location>
    <ligand>
        <name>Zn(2+)</name>
        <dbReference type="ChEBI" id="CHEBI:29105"/>
        <label>1</label>
    </ligand>
</feature>
<accession>B1HUD0</accession>
<reference key="1">
    <citation type="journal article" date="2008" name="J. Bacteriol.">
        <title>Complete genome sequence of the mosquitocidal bacterium Bacillus sphaericus C3-41 and comparison with those of closely related Bacillus species.</title>
        <authorList>
            <person name="Hu X."/>
            <person name="Fan W."/>
            <person name="Han B."/>
            <person name="Liu H."/>
            <person name="Zheng D."/>
            <person name="Li Q."/>
            <person name="Dong W."/>
            <person name="Yan J."/>
            <person name="Gao M."/>
            <person name="Berry C."/>
            <person name="Yuan Z."/>
        </authorList>
    </citation>
    <scope>NUCLEOTIDE SEQUENCE [LARGE SCALE GENOMIC DNA]</scope>
    <source>
        <strain>C3-41</strain>
    </source>
</reference>
<evidence type="ECO:0000255" key="1">
    <source>
        <dbReference type="HAMAP-Rule" id="MF_01152"/>
    </source>
</evidence>